<dbReference type="EMBL" id="U78027">
    <property type="protein sequence ID" value="AAB64204.1"/>
    <property type="molecule type" value="Genomic_DNA"/>
</dbReference>
<dbReference type="EMBL" id="AY305871">
    <property type="protein sequence ID" value="AAQ95213.1"/>
    <property type="molecule type" value="mRNA"/>
</dbReference>
<dbReference type="EMBL" id="CR542198">
    <property type="protein sequence ID" value="CAG46995.1"/>
    <property type="molecule type" value="mRNA"/>
</dbReference>
<dbReference type="EMBL" id="AY927233">
    <property type="protein sequence ID" value="AAX08138.1"/>
    <property type="molecule type" value="mRNA"/>
</dbReference>
<dbReference type="EMBL" id="AL035422">
    <property type="status" value="NOT_ANNOTATED_CDS"/>
    <property type="molecule type" value="Genomic_DNA"/>
</dbReference>
<dbReference type="EMBL" id="CH471115">
    <property type="protein sequence ID" value="EAX02860.1"/>
    <property type="molecule type" value="Genomic_DNA"/>
</dbReference>
<dbReference type="EMBL" id="BC001781">
    <property type="protein sequence ID" value="AAH01781.1"/>
    <property type="molecule type" value="mRNA"/>
</dbReference>
<dbReference type="EMBL" id="BC031015">
    <property type="protein sequence ID" value="AAH31015.1"/>
    <property type="molecule type" value="mRNA"/>
</dbReference>
<dbReference type="EMBL" id="BC062219">
    <property type="protein sequence ID" value="AAH62219.1"/>
    <property type="molecule type" value="mRNA"/>
</dbReference>
<dbReference type="EMBL" id="BC070204">
    <property type="protein sequence ID" value="AAH70204.1"/>
    <property type="molecule type" value="mRNA"/>
</dbReference>
<dbReference type="CCDS" id="CCDS14483.3"/>
<dbReference type="RefSeq" id="NP_066357.3">
    <property type="nucleotide sequence ID" value="NM_021029.6"/>
</dbReference>
<dbReference type="PDB" id="4UG0">
    <property type="method" value="EM"/>
    <property type="chains" value="Lo=1-106"/>
</dbReference>
<dbReference type="PDB" id="4V6X">
    <property type="method" value="EM"/>
    <property type="resolution" value="5.00 A"/>
    <property type="chains" value="Co=1-106"/>
</dbReference>
<dbReference type="PDB" id="5AJ0">
    <property type="method" value="EM"/>
    <property type="resolution" value="3.50 A"/>
    <property type="chains" value="Ao=1-106"/>
</dbReference>
<dbReference type="PDB" id="5LKS">
    <property type="method" value="EM"/>
    <property type="resolution" value="3.60 A"/>
    <property type="chains" value="Lo=1-106"/>
</dbReference>
<dbReference type="PDB" id="5T2C">
    <property type="method" value="EM"/>
    <property type="resolution" value="3.60 A"/>
    <property type="chains" value="i=1-106"/>
</dbReference>
<dbReference type="PDB" id="6IP5">
    <property type="method" value="EM"/>
    <property type="resolution" value="3.90 A"/>
    <property type="chains" value="2i=1-106"/>
</dbReference>
<dbReference type="PDB" id="6IP6">
    <property type="method" value="EM"/>
    <property type="resolution" value="4.50 A"/>
    <property type="chains" value="2i=1-106"/>
</dbReference>
<dbReference type="PDB" id="6IP8">
    <property type="method" value="EM"/>
    <property type="resolution" value="3.90 A"/>
    <property type="chains" value="2i=1-106"/>
</dbReference>
<dbReference type="PDB" id="6LQM">
    <property type="method" value="EM"/>
    <property type="resolution" value="3.09 A"/>
    <property type="chains" value="W=1-106"/>
</dbReference>
<dbReference type="PDB" id="6LSR">
    <property type="method" value="EM"/>
    <property type="resolution" value="3.13 A"/>
    <property type="chains" value="W=1-106"/>
</dbReference>
<dbReference type="PDB" id="6LSS">
    <property type="method" value="EM"/>
    <property type="resolution" value="3.23 A"/>
    <property type="chains" value="W=1-106"/>
</dbReference>
<dbReference type="PDB" id="6LU8">
    <property type="method" value="EM"/>
    <property type="resolution" value="3.13 A"/>
    <property type="chains" value="W=1-106"/>
</dbReference>
<dbReference type="PDB" id="6OLE">
    <property type="method" value="EM"/>
    <property type="resolution" value="3.10 A"/>
    <property type="chains" value="p=2-106"/>
</dbReference>
<dbReference type="PDB" id="6OLF">
    <property type="method" value="EM"/>
    <property type="resolution" value="3.90 A"/>
    <property type="chains" value="p=2-106"/>
</dbReference>
<dbReference type="PDB" id="6OLG">
    <property type="method" value="EM"/>
    <property type="resolution" value="3.40 A"/>
    <property type="chains" value="Ao=2-106"/>
</dbReference>
<dbReference type="PDB" id="6OLI">
    <property type="method" value="EM"/>
    <property type="resolution" value="3.50 A"/>
    <property type="chains" value="p=2-106"/>
</dbReference>
<dbReference type="PDB" id="6OLZ">
    <property type="method" value="EM"/>
    <property type="resolution" value="3.90 A"/>
    <property type="chains" value="Ao=2-106"/>
</dbReference>
<dbReference type="PDB" id="6OM0">
    <property type="method" value="EM"/>
    <property type="resolution" value="3.10 A"/>
    <property type="chains" value="p=2-106"/>
</dbReference>
<dbReference type="PDB" id="6OM7">
    <property type="method" value="EM"/>
    <property type="resolution" value="3.70 A"/>
    <property type="chains" value="p=2-106"/>
</dbReference>
<dbReference type="PDB" id="6QZP">
    <property type="method" value="EM"/>
    <property type="resolution" value="2.90 A"/>
    <property type="chains" value="Lo=2-106"/>
</dbReference>
<dbReference type="PDB" id="6XA1">
    <property type="method" value="EM"/>
    <property type="resolution" value="2.80 A"/>
    <property type="chains" value="Lo=2-106"/>
</dbReference>
<dbReference type="PDB" id="6Y0G">
    <property type="method" value="EM"/>
    <property type="resolution" value="3.20 A"/>
    <property type="chains" value="Lo=1-106"/>
</dbReference>
<dbReference type="PDB" id="6Y2L">
    <property type="method" value="EM"/>
    <property type="resolution" value="3.00 A"/>
    <property type="chains" value="Lo=1-106"/>
</dbReference>
<dbReference type="PDB" id="6Y57">
    <property type="method" value="EM"/>
    <property type="resolution" value="3.50 A"/>
    <property type="chains" value="Lo=1-106"/>
</dbReference>
<dbReference type="PDB" id="6Y6X">
    <property type="method" value="EM"/>
    <property type="resolution" value="2.80 A"/>
    <property type="chains" value="Lo=2-106"/>
</dbReference>
<dbReference type="PDB" id="6Z6M">
    <property type="method" value="EM"/>
    <property type="resolution" value="3.10 A"/>
    <property type="chains" value="Lo=1-106"/>
</dbReference>
<dbReference type="PDB" id="6Z6N">
    <property type="method" value="EM"/>
    <property type="resolution" value="2.90 A"/>
    <property type="chains" value="Lo=1-106"/>
</dbReference>
<dbReference type="PDB" id="6ZM7">
    <property type="method" value="EM"/>
    <property type="resolution" value="2.70 A"/>
    <property type="chains" value="Lo=1-106"/>
</dbReference>
<dbReference type="PDB" id="6ZME">
    <property type="method" value="EM"/>
    <property type="resolution" value="3.00 A"/>
    <property type="chains" value="Lo=1-106"/>
</dbReference>
<dbReference type="PDB" id="6ZMI">
    <property type="method" value="EM"/>
    <property type="resolution" value="2.60 A"/>
    <property type="chains" value="Lo=1-106"/>
</dbReference>
<dbReference type="PDB" id="6ZMO">
    <property type="method" value="EM"/>
    <property type="resolution" value="3.10 A"/>
    <property type="chains" value="Lo=1-106"/>
</dbReference>
<dbReference type="PDB" id="7BHP">
    <property type="method" value="EM"/>
    <property type="resolution" value="3.30 A"/>
    <property type="chains" value="Lo=1-106"/>
</dbReference>
<dbReference type="PDB" id="7F5S">
    <property type="method" value="EM"/>
    <property type="resolution" value="2.72 A"/>
    <property type="chains" value="Lo=1-106"/>
</dbReference>
<dbReference type="PDB" id="7OW7">
    <property type="method" value="EM"/>
    <property type="resolution" value="2.20 A"/>
    <property type="chains" value="i=1-106"/>
</dbReference>
<dbReference type="PDB" id="8A3D">
    <property type="method" value="EM"/>
    <property type="resolution" value="1.67 A"/>
    <property type="chains" value="i=1-106"/>
</dbReference>
<dbReference type="PDB" id="8FL6">
    <property type="method" value="EM"/>
    <property type="resolution" value="2.62 A"/>
    <property type="chains" value="LV=1-106"/>
</dbReference>
<dbReference type="PDB" id="8FL7">
    <property type="method" value="EM"/>
    <property type="resolution" value="2.55 A"/>
    <property type="chains" value="LV=1-106"/>
</dbReference>
<dbReference type="PDB" id="8FL9">
    <property type="method" value="EM"/>
    <property type="resolution" value="2.75 A"/>
    <property type="chains" value="LV=1-106"/>
</dbReference>
<dbReference type="PDB" id="8FLA">
    <property type="method" value="EM"/>
    <property type="resolution" value="2.63 A"/>
    <property type="chains" value="LV=1-106"/>
</dbReference>
<dbReference type="PDB" id="8FLB">
    <property type="method" value="EM"/>
    <property type="resolution" value="2.55 A"/>
    <property type="chains" value="LV=1-106"/>
</dbReference>
<dbReference type="PDB" id="8FLC">
    <property type="method" value="EM"/>
    <property type="resolution" value="2.76 A"/>
    <property type="chains" value="LV=1-106"/>
</dbReference>
<dbReference type="PDB" id="8FLD">
    <property type="method" value="EM"/>
    <property type="resolution" value="2.58 A"/>
    <property type="chains" value="LV=1-106"/>
</dbReference>
<dbReference type="PDB" id="8FLE">
    <property type="method" value="EM"/>
    <property type="resolution" value="2.48 A"/>
    <property type="chains" value="LV=1-106"/>
</dbReference>
<dbReference type="PDB" id="8FLF">
    <property type="method" value="EM"/>
    <property type="resolution" value="2.65 A"/>
    <property type="chains" value="LV=1-106"/>
</dbReference>
<dbReference type="PDB" id="8IDT">
    <property type="method" value="EM"/>
    <property type="resolution" value="2.80 A"/>
    <property type="chains" value="W=1-106"/>
</dbReference>
<dbReference type="PDB" id="8IDY">
    <property type="method" value="EM"/>
    <property type="resolution" value="3.00 A"/>
    <property type="chains" value="W=1-106"/>
</dbReference>
<dbReference type="PDB" id="8IFD">
    <property type="method" value="EM"/>
    <property type="resolution" value="2.59 A"/>
    <property type="chains" value="2i=1-106"/>
</dbReference>
<dbReference type="PDB" id="8IFE">
    <property type="method" value="EM"/>
    <property type="resolution" value="2.57 A"/>
    <property type="chains" value="2i=1-106"/>
</dbReference>
<dbReference type="PDB" id="8INE">
    <property type="method" value="EM"/>
    <property type="resolution" value="3.20 A"/>
    <property type="chains" value="W=1-106"/>
</dbReference>
<dbReference type="PDB" id="8INF">
    <property type="method" value="EM"/>
    <property type="resolution" value="3.00 A"/>
    <property type="chains" value="W=1-106"/>
</dbReference>
<dbReference type="PDB" id="8JDJ">
    <property type="method" value="EM"/>
    <property type="resolution" value="2.50 A"/>
    <property type="chains" value="t=1-106"/>
</dbReference>
<dbReference type="PDB" id="8JDK">
    <property type="method" value="EM"/>
    <property type="resolution" value="2.26 A"/>
    <property type="chains" value="t=1-106"/>
</dbReference>
<dbReference type="PDB" id="8JDL">
    <property type="method" value="EM"/>
    <property type="resolution" value="2.42 A"/>
    <property type="chains" value="t=1-106"/>
</dbReference>
<dbReference type="PDB" id="8JDM">
    <property type="method" value="EM"/>
    <property type="resolution" value="2.67 A"/>
    <property type="chains" value="t=1-106"/>
</dbReference>
<dbReference type="PDB" id="8K2C">
    <property type="method" value="EM"/>
    <property type="resolution" value="2.40 A"/>
    <property type="chains" value="Lo=1-106"/>
</dbReference>
<dbReference type="PDB" id="8OHD">
    <property type="method" value="EM"/>
    <property type="resolution" value="3.10 A"/>
    <property type="chains" value="Lo=1-106"/>
</dbReference>
<dbReference type="PDB" id="8OJ0">
    <property type="method" value="EM"/>
    <property type="resolution" value="3.30 A"/>
    <property type="chains" value="Lo=1-106"/>
</dbReference>
<dbReference type="PDB" id="8OJ5">
    <property type="method" value="EM"/>
    <property type="resolution" value="2.90 A"/>
    <property type="chains" value="Lo=1-106"/>
</dbReference>
<dbReference type="PDB" id="8OJ8">
    <property type="method" value="EM"/>
    <property type="resolution" value="3.30 A"/>
    <property type="chains" value="Lo=1-106"/>
</dbReference>
<dbReference type="PDB" id="8QFD">
    <property type="method" value="EM"/>
    <property type="resolution" value="2.20 A"/>
    <property type="chains" value="o=1-106"/>
</dbReference>
<dbReference type="PDB" id="8QOI">
    <property type="method" value="EM"/>
    <property type="resolution" value="1.90 A"/>
    <property type="chains" value="Lo=1-106"/>
</dbReference>
<dbReference type="PDB" id="8QYX">
    <property type="method" value="EM"/>
    <property type="resolution" value="1.78 A"/>
    <property type="chains" value="i1=1-106"/>
</dbReference>
<dbReference type="PDB" id="8UKB">
    <property type="method" value="EM"/>
    <property type="resolution" value="3.05 A"/>
    <property type="chains" value="Lo=2-106"/>
</dbReference>
<dbReference type="PDB" id="8XSX">
    <property type="method" value="EM"/>
    <property type="resolution" value="2.40 A"/>
    <property type="chains" value="Lo=1-106"/>
</dbReference>
<dbReference type="PDB" id="8XSY">
    <property type="method" value="EM"/>
    <property type="resolution" value="3.00 A"/>
    <property type="chains" value="Lo=1-106"/>
</dbReference>
<dbReference type="PDB" id="8XSZ">
    <property type="method" value="EM"/>
    <property type="resolution" value="3.20 A"/>
    <property type="chains" value="Lo=1-106"/>
</dbReference>
<dbReference type="PDB" id="8Y0W">
    <property type="method" value="EM"/>
    <property type="resolution" value="3.40 A"/>
    <property type="chains" value="Lo=1-106"/>
</dbReference>
<dbReference type="PDB" id="8Y0X">
    <property type="method" value="EM"/>
    <property type="resolution" value="3.30 A"/>
    <property type="chains" value="Lo=1-106"/>
</dbReference>
<dbReference type="PDB" id="8YOO">
    <property type="method" value="EM"/>
    <property type="resolution" value="2.00 A"/>
    <property type="chains" value="Lo=1-106"/>
</dbReference>
<dbReference type="PDB" id="8YOP">
    <property type="method" value="EM"/>
    <property type="resolution" value="2.20 A"/>
    <property type="chains" value="Lo=1-106"/>
</dbReference>
<dbReference type="PDB" id="9C3H">
    <property type="method" value="EM"/>
    <property type="resolution" value="2.00 A"/>
    <property type="chains" value="Le=1-106"/>
</dbReference>
<dbReference type="PDB" id="9G8M">
    <property type="method" value="EM"/>
    <property type="resolution" value="3.30 A"/>
    <property type="chains" value="Lo=1-106"/>
</dbReference>
<dbReference type="PDB" id="9GMO">
    <property type="method" value="EM"/>
    <property type="resolution" value="2.59 A"/>
    <property type="chains" value="i=1-106"/>
</dbReference>
<dbReference type="PDBsum" id="4UG0"/>
<dbReference type="PDBsum" id="4V6X"/>
<dbReference type="PDBsum" id="5AJ0"/>
<dbReference type="PDBsum" id="5LKS"/>
<dbReference type="PDBsum" id="5T2C"/>
<dbReference type="PDBsum" id="6IP5"/>
<dbReference type="PDBsum" id="6IP6"/>
<dbReference type="PDBsum" id="6IP8"/>
<dbReference type="PDBsum" id="6LQM"/>
<dbReference type="PDBsum" id="6LSR"/>
<dbReference type="PDBsum" id="6LSS"/>
<dbReference type="PDBsum" id="6LU8"/>
<dbReference type="PDBsum" id="6OLE"/>
<dbReference type="PDBsum" id="6OLF"/>
<dbReference type="PDBsum" id="6OLG"/>
<dbReference type="PDBsum" id="6OLI"/>
<dbReference type="PDBsum" id="6OLZ"/>
<dbReference type="PDBsum" id="6OM0"/>
<dbReference type="PDBsum" id="6OM7"/>
<dbReference type="PDBsum" id="6QZP"/>
<dbReference type="PDBsum" id="6XA1"/>
<dbReference type="PDBsum" id="6Y0G"/>
<dbReference type="PDBsum" id="6Y2L"/>
<dbReference type="PDBsum" id="6Y57"/>
<dbReference type="PDBsum" id="6Y6X"/>
<dbReference type="PDBsum" id="6Z6M"/>
<dbReference type="PDBsum" id="6Z6N"/>
<dbReference type="PDBsum" id="6ZM7"/>
<dbReference type="PDBsum" id="6ZME"/>
<dbReference type="PDBsum" id="6ZMI"/>
<dbReference type="PDBsum" id="6ZMO"/>
<dbReference type="PDBsum" id="7BHP"/>
<dbReference type="PDBsum" id="7F5S"/>
<dbReference type="PDBsum" id="7OW7"/>
<dbReference type="PDBsum" id="8A3D"/>
<dbReference type="PDBsum" id="8FL6"/>
<dbReference type="PDBsum" id="8FL7"/>
<dbReference type="PDBsum" id="8FL9"/>
<dbReference type="PDBsum" id="8FLA"/>
<dbReference type="PDBsum" id="8FLB"/>
<dbReference type="PDBsum" id="8FLC"/>
<dbReference type="PDBsum" id="8FLD"/>
<dbReference type="PDBsum" id="8FLE"/>
<dbReference type="PDBsum" id="8FLF"/>
<dbReference type="PDBsum" id="8IDT"/>
<dbReference type="PDBsum" id="8IDY"/>
<dbReference type="PDBsum" id="8IFD"/>
<dbReference type="PDBsum" id="8IFE"/>
<dbReference type="PDBsum" id="8INE"/>
<dbReference type="PDBsum" id="8INF"/>
<dbReference type="PDBsum" id="8JDJ"/>
<dbReference type="PDBsum" id="8JDK"/>
<dbReference type="PDBsum" id="8JDL"/>
<dbReference type="PDBsum" id="8JDM"/>
<dbReference type="PDBsum" id="8K2C"/>
<dbReference type="PDBsum" id="8OHD"/>
<dbReference type="PDBsum" id="8OJ0"/>
<dbReference type="PDBsum" id="8OJ5"/>
<dbReference type="PDBsum" id="8OJ8"/>
<dbReference type="PDBsum" id="8QFD"/>
<dbReference type="PDBsum" id="8QOI"/>
<dbReference type="PDBsum" id="8QYX"/>
<dbReference type="PDBsum" id="8UKB"/>
<dbReference type="PDBsum" id="8XSX"/>
<dbReference type="PDBsum" id="8XSY"/>
<dbReference type="PDBsum" id="8XSZ"/>
<dbReference type="PDBsum" id="8Y0W"/>
<dbReference type="PDBsum" id="8Y0X"/>
<dbReference type="PDBsum" id="8YOO"/>
<dbReference type="PDBsum" id="8YOP"/>
<dbReference type="PDBsum" id="9C3H"/>
<dbReference type="PDBsum" id="9G8M"/>
<dbReference type="PDBsum" id="9GMO"/>
<dbReference type="EMDB" id="EMD-0948"/>
<dbReference type="EMDB" id="EMD-0963"/>
<dbReference type="EMDB" id="EMD-0964"/>
<dbReference type="EMDB" id="EMD-0978"/>
<dbReference type="EMDB" id="EMD-10668"/>
<dbReference type="EMDB" id="EMD-10674"/>
<dbReference type="EMDB" id="EMD-10690"/>
<dbReference type="EMDB" id="EMD-10709"/>
<dbReference type="EMDB" id="EMD-11099"/>
<dbReference type="EMDB" id="EMD-11100"/>
<dbReference type="EMDB" id="EMD-11288"/>
<dbReference type="EMDB" id="EMD-11289"/>
<dbReference type="EMDB" id="EMD-11292"/>
<dbReference type="EMDB" id="EMD-11299"/>
<dbReference type="EMDB" id="EMD-12189"/>
<dbReference type="EMDB" id="EMD-13094"/>
<dbReference type="EMDB" id="EMD-15113"/>
<dbReference type="EMDB" id="EMD-16880"/>
<dbReference type="EMDB" id="EMD-16902"/>
<dbReference type="EMDB" id="EMD-16905"/>
<dbReference type="EMDB" id="EMD-16908"/>
<dbReference type="EMDB" id="EMD-18382"/>
<dbReference type="EMDB" id="EMD-18539"/>
<dbReference type="EMDB" id="EMD-18765"/>
<dbReference type="EMDB" id="EMD-31465"/>
<dbReference type="EMDB" id="EMD-35370"/>
<dbReference type="EMDB" id="EMD-35371"/>
<dbReference type="EMDB" id="EMD-35413"/>
<dbReference type="EMDB" id="EMD-35414"/>
<dbReference type="EMDB" id="EMD-35596"/>
<dbReference type="EMDB" id="EMD-35597"/>
<dbReference type="EMDB" id="EMD-36178"/>
<dbReference type="EMDB" id="EMD-36179"/>
<dbReference type="EMDB" id="EMD-36180"/>
<dbReference type="EMDB" id="EMD-36181"/>
<dbReference type="EMDB" id="EMD-36838"/>
<dbReference type="EMDB" id="EMD-38629"/>
<dbReference type="EMDB" id="EMD-38630"/>
<dbReference type="EMDB" id="EMD-38631"/>
<dbReference type="EMDB" id="EMD-3883"/>
<dbReference type="EMDB" id="EMD-39455"/>
<dbReference type="EMDB" id="EMD-39456"/>
<dbReference type="EMDB" id="EMD-4070"/>
<dbReference type="EMDB" id="EMD-42351"/>
<dbReference type="EMDB" id="EMD-45170"/>
<dbReference type="EMDB" id="EMD-51132"/>
<dbReference type="EMDB" id="EMD-51452"/>
<dbReference type="EMDB" id="EMD-9701"/>
<dbReference type="EMDB" id="EMD-9702"/>
<dbReference type="EMDB" id="EMD-9703"/>
<dbReference type="SMR" id="P83881"/>
<dbReference type="BioGRID" id="112092">
    <property type="interactions" value="160"/>
</dbReference>
<dbReference type="ComplexPortal" id="CPX-5183">
    <property type="entry name" value="60S cytosolic large ribosomal subunit"/>
</dbReference>
<dbReference type="ComplexPortal" id="CPX-7664">
    <property type="entry name" value="60S cytosolic large ribosomal subunit, testis-specific variant"/>
</dbReference>
<dbReference type="ComplexPortal" id="CPX-7665">
    <property type="entry name" value="60S cytosolic large ribosomal subunit, striated muscle variant"/>
</dbReference>
<dbReference type="CORUM" id="P83881"/>
<dbReference type="FunCoup" id="P83881">
    <property type="interactions" value="1820"/>
</dbReference>
<dbReference type="IntAct" id="P83881">
    <property type="interactions" value="35"/>
</dbReference>
<dbReference type="MINT" id="P83881"/>
<dbReference type="STRING" id="9606.ENSP00000404375"/>
<dbReference type="GlyGen" id="P83881">
    <property type="glycosylation" value="1 site, 1 O-linked glycan (1 site)"/>
</dbReference>
<dbReference type="iPTMnet" id="P83881"/>
<dbReference type="PhosphoSitePlus" id="P83881"/>
<dbReference type="SwissPalm" id="P83881"/>
<dbReference type="BioMuta" id="RPL36A"/>
<dbReference type="DMDM" id="47117731"/>
<dbReference type="jPOST" id="P83881"/>
<dbReference type="MassIVE" id="P83881"/>
<dbReference type="PaxDb" id="9606-ENSP00000404375"/>
<dbReference type="PeptideAtlas" id="P83881"/>
<dbReference type="ProteomicsDB" id="57741"/>
<dbReference type="Pumba" id="P83881"/>
<dbReference type="TopDownProteomics" id="P83881"/>
<dbReference type="Antibodypedia" id="34835">
    <property type="antibodies" value="131 antibodies from 20 providers"/>
</dbReference>
<dbReference type="DNASU" id="6173"/>
<dbReference type="Ensembl" id="ENST00000553110.8">
    <property type="protein sequence ID" value="ENSP00000446503.2"/>
    <property type="gene ID" value="ENSG00000241343.10"/>
</dbReference>
<dbReference type="GeneID" id="6173"/>
<dbReference type="KEGG" id="hsa:6173"/>
<dbReference type="MANE-Select" id="ENST00000553110.8">
    <property type="protein sequence ID" value="ENSP00000446503.2"/>
    <property type="RefSeq nucleotide sequence ID" value="NM_021029.6"/>
    <property type="RefSeq protein sequence ID" value="NP_066357.3"/>
</dbReference>
<dbReference type="UCSC" id="uc065agx.1">
    <property type="organism name" value="human"/>
</dbReference>
<dbReference type="AGR" id="HGNC:10359"/>
<dbReference type="CTD" id="6173"/>
<dbReference type="DisGeNET" id="6173"/>
<dbReference type="GeneCards" id="RPL36A"/>
<dbReference type="HGNC" id="HGNC:10359">
    <property type="gene designation" value="RPL36A"/>
</dbReference>
<dbReference type="HPA" id="ENSG00000241343">
    <property type="expression patterns" value="Low tissue specificity"/>
</dbReference>
<dbReference type="MIM" id="300902">
    <property type="type" value="gene"/>
</dbReference>
<dbReference type="neXtProt" id="NX_P83881"/>
<dbReference type="OpenTargets" id="ENSG00000241343"/>
<dbReference type="PharmGKB" id="PA164742367"/>
<dbReference type="VEuPathDB" id="HostDB:ENSG00000241343"/>
<dbReference type="eggNOG" id="KOG3464">
    <property type="taxonomic scope" value="Eukaryota"/>
</dbReference>
<dbReference type="GeneTree" id="ENSGT00390000018085"/>
<dbReference type="InParanoid" id="P83881"/>
<dbReference type="OrthoDB" id="9511283at2759"/>
<dbReference type="PAN-GO" id="P83881">
    <property type="GO annotations" value="1 GO annotation based on evolutionary models"/>
</dbReference>
<dbReference type="PhylomeDB" id="P83881"/>
<dbReference type="PathwayCommons" id="P83881"/>
<dbReference type="Reactome" id="R-HSA-156827">
    <property type="pathway name" value="L13a-mediated translational silencing of Ceruloplasmin expression"/>
</dbReference>
<dbReference type="Reactome" id="R-HSA-156902">
    <property type="pathway name" value="Peptide chain elongation"/>
</dbReference>
<dbReference type="Reactome" id="R-HSA-1799339">
    <property type="pathway name" value="SRP-dependent cotranslational protein targeting to membrane"/>
</dbReference>
<dbReference type="Reactome" id="R-HSA-192823">
    <property type="pathway name" value="Viral mRNA Translation"/>
</dbReference>
<dbReference type="Reactome" id="R-HSA-2408557">
    <property type="pathway name" value="Selenocysteine synthesis"/>
</dbReference>
<dbReference type="Reactome" id="R-HSA-6791226">
    <property type="pathway name" value="Major pathway of rRNA processing in the nucleolus and cytosol"/>
</dbReference>
<dbReference type="Reactome" id="R-HSA-72689">
    <property type="pathway name" value="Formation of a pool of free 40S subunits"/>
</dbReference>
<dbReference type="Reactome" id="R-HSA-72706">
    <property type="pathway name" value="GTP hydrolysis and joining of the 60S ribosomal subunit"/>
</dbReference>
<dbReference type="Reactome" id="R-HSA-72764">
    <property type="pathway name" value="Eukaryotic Translation Termination"/>
</dbReference>
<dbReference type="Reactome" id="R-HSA-9010553">
    <property type="pathway name" value="Regulation of expression of SLITs and ROBOs"/>
</dbReference>
<dbReference type="Reactome" id="R-HSA-9633012">
    <property type="pathway name" value="Response of EIF2AK4 (GCN2) to amino acid deficiency"/>
</dbReference>
<dbReference type="Reactome" id="R-HSA-975956">
    <property type="pathway name" value="Nonsense Mediated Decay (NMD) independent of the Exon Junction Complex (EJC)"/>
</dbReference>
<dbReference type="Reactome" id="R-HSA-975957">
    <property type="pathway name" value="Nonsense Mediated Decay (NMD) enhanced by the Exon Junction Complex (EJC)"/>
</dbReference>
<dbReference type="SignaLink" id="P83881"/>
<dbReference type="SIGNOR" id="P83881"/>
<dbReference type="BioGRID-ORCS" id="6173">
    <property type="hits" value="364 hits in 768 CRISPR screens"/>
</dbReference>
<dbReference type="CD-CODE" id="91857CE7">
    <property type="entry name" value="Nucleolus"/>
</dbReference>
<dbReference type="ChiTaRS" id="RPL36A">
    <property type="organism name" value="human"/>
</dbReference>
<dbReference type="GeneWiki" id="RPL36A"/>
<dbReference type="GenomeRNAi" id="6173"/>
<dbReference type="Pharos" id="P83881">
    <property type="development level" value="Tbio"/>
</dbReference>
<dbReference type="PRO" id="PR:P83881"/>
<dbReference type="Proteomes" id="UP000005640">
    <property type="component" value="Chromosome X"/>
</dbReference>
<dbReference type="RNAct" id="P83881">
    <property type="molecule type" value="protein"/>
</dbReference>
<dbReference type="Bgee" id="ENSG00000241343">
    <property type="expression patterns" value="Expressed in cortical plate and 100 other cell types or tissues"/>
</dbReference>
<dbReference type="ExpressionAtlas" id="P83881">
    <property type="expression patterns" value="baseline and differential"/>
</dbReference>
<dbReference type="GO" id="GO:0005829">
    <property type="term" value="C:cytosol"/>
    <property type="evidence" value="ECO:0000314"/>
    <property type="project" value="HPA"/>
</dbReference>
<dbReference type="GO" id="GO:0022625">
    <property type="term" value="C:cytosolic large ribosomal subunit"/>
    <property type="evidence" value="ECO:0000314"/>
    <property type="project" value="UniProtKB"/>
</dbReference>
<dbReference type="GO" id="GO:0022626">
    <property type="term" value="C:cytosolic ribosome"/>
    <property type="evidence" value="ECO:0000314"/>
    <property type="project" value="FlyBase"/>
</dbReference>
<dbReference type="GO" id="GO:0005783">
    <property type="term" value="C:endoplasmic reticulum"/>
    <property type="evidence" value="ECO:0000314"/>
    <property type="project" value="HPA"/>
</dbReference>
<dbReference type="GO" id="GO:0005886">
    <property type="term" value="C:plasma membrane"/>
    <property type="evidence" value="ECO:0000314"/>
    <property type="project" value="HPA"/>
</dbReference>
<dbReference type="GO" id="GO:0005840">
    <property type="term" value="C:ribosome"/>
    <property type="evidence" value="ECO:0000303"/>
    <property type="project" value="UniProtKB"/>
</dbReference>
<dbReference type="GO" id="GO:0003723">
    <property type="term" value="F:RNA binding"/>
    <property type="evidence" value="ECO:0007005"/>
    <property type="project" value="UniProtKB"/>
</dbReference>
<dbReference type="GO" id="GO:0003735">
    <property type="term" value="F:structural constituent of ribosome"/>
    <property type="evidence" value="ECO:0000314"/>
    <property type="project" value="UniProtKB"/>
</dbReference>
<dbReference type="GO" id="GO:0002181">
    <property type="term" value="P:cytoplasmic translation"/>
    <property type="evidence" value="ECO:0000314"/>
    <property type="project" value="UniProtKB"/>
</dbReference>
<dbReference type="GO" id="GO:0006412">
    <property type="term" value="P:translation"/>
    <property type="evidence" value="ECO:0000303"/>
    <property type="project" value="UniProtKB"/>
</dbReference>
<dbReference type="FunFam" id="3.10.450.80:FF:000001">
    <property type="entry name" value="60S ribosomal protein L44"/>
    <property type="match status" value="1"/>
</dbReference>
<dbReference type="Gene3D" id="3.10.450.80">
    <property type="match status" value="1"/>
</dbReference>
<dbReference type="InterPro" id="IPR000552">
    <property type="entry name" value="Ribosomal_eL44"/>
</dbReference>
<dbReference type="InterPro" id="IPR053708">
    <property type="entry name" value="Ribosomal_LSU_eL42"/>
</dbReference>
<dbReference type="InterPro" id="IPR011332">
    <property type="entry name" value="Ribosomal_zn-bd"/>
</dbReference>
<dbReference type="PANTHER" id="PTHR10369">
    <property type="entry name" value="60S RIBOSOMAL PROTEIN L36A/L44"/>
    <property type="match status" value="1"/>
</dbReference>
<dbReference type="Pfam" id="PF00935">
    <property type="entry name" value="Ribosomal_L44"/>
    <property type="match status" value="1"/>
</dbReference>
<dbReference type="SUPFAM" id="SSF57829">
    <property type="entry name" value="Zn-binding ribosomal proteins"/>
    <property type="match status" value="1"/>
</dbReference>
<dbReference type="PROSITE" id="PS01172">
    <property type="entry name" value="RIBOSOMAL_L44E"/>
    <property type="match status" value="1"/>
</dbReference>
<sequence length="106" mass="12441">MVNVPKTRRTFCKKCGKHQPHKVTQYKKGKDSLYAQGKRRYDRKQSGYGGQTKPIFRKKAKTTKKIVLRLECVEPNCRSKRMLAIKRCKHFELGGDKKRKGQVIQF</sequence>
<accession>P83881</accession>
<accession>P09896</accession>
<accession>P10661</accession>
<accession>Q08ES5</accession>
<accession>Q5J9I6</accession>
<feature type="chain" id="PRO_0000149117" description="Large ribosomal subunit protein eL42">
    <location>
        <begin position="1"/>
        <end position="106"/>
    </location>
</feature>
<feature type="region of interest" description="Disordered" evidence="1">
    <location>
        <begin position="34"/>
        <end position="53"/>
    </location>
</feature>
<name>RL36A_HUMAN</name>
<gene>
    <name type="primary">RPL36A</name>
    <name type="synonym">RPL44</name>
    <name type="ORF">GIG15</name>
    <name type="ORF">MIG6</name>
</gene>
<organism>
    <name type="scientific">Homo sapiens</name>
    <name type="common">Human</name>
    <dbReference type="NCBI Taxonomy" id="9606"/>
    <lineage>
        <taxon>Eukaryota</taxon>
        <taxon>Metazoa</taxon>
        <taxon>Chordata</taxon>
        <taxon>Craniata</taxon>
        <taxon>Vertebrata</taxon>
        <taxon>Euteleostomi</taxon>
        <taxon>Mammalia</taxon>
        <taxon>Eutheria</taxon>
        <taxon>Euarchontoglires</taxon>
        <taxon>Primates</taxon>
        <taxon>Haplorrhini</taxon>
        <taxon>Catarrhini</taxon>
        <taxon>Hominidae</taxon>
        <taxon>Homo</taxon>
    </lineage>
</organism>
<protein>
    <recommendedName>
        <fullName evidence="4">Large ribosomal subunit protein eL42</fullName>
    </recommendedName>
    <alternativeName>
        <fullName>60S ribosomal protein L36a</fullName>
    </alternativeName>
    <alternativeName>
        <fullName>60S ribosomal protein L44</fullName>
    </alternativeName>
    <alternativeName>
        <fullName>Cell growth-inhibiting gene 15 protein</fullName>
    </alternativeName>
    <alternativeName>
        <fullName>Cell migration-inducing gene 6 protein</fullName>
    </alternativeName>
</protein>
<keyword id="KW-0002">3D-structure</keyword>
<keyword id="KW-0963">Cytoplasm</keyword>
<keyword id="KW-1267">Proteomics identification</keyword>
<keyword id="KW-1185">Reference proteome</keyword>
<keyword id="KW-0687">Ribonucleoprotein</keyword>
<keyword id="KW-0689">Ribosomal protein</keyword>
<proteinExistence type="evidence at protein level"/>
<evidence type="ECO:0000256" key="1">
    <source>
        <dbReference type="SAM" id="MobiDB-lite"/>
    </source>
</evidence>
<evidence type="ECO:0000269" key="2">
    <source>
    </source>
</evidence>
<evidence type="ECO:0000269" key="3">
    <source>
    </source>
</evidence>
<evidence type="ECO:0000303" key="4">
    <source>
    </source>
</evidence>
<evidence type="ECO:0000305" key="5"/>
<evidence type="ECO:0007744" key="6">
    <source>
        <dbReference type="PDB" id="6LQM"/>
    </source>
</evidence>
<evidence type="ECO:0007744" key="7">
    <source>
        <dbReference type="PDB" id="6LSR"/>
    </source>
</evidence>
<evidence type="ECO:0007744" key="8">
    <source>
        <dbReference type="PDB" id="6LSS"/>
    </source>
</evidence>
<evidence type="ECO:0007744" key="9">
    <source>
        <dbReference type="PDB" id="6LU8"/>
    </source>
</evidence>
<reference key="1">
    <citation type="journal article" date="1997" name="Genome Res.">
        <title>Large-scale comparative sequence analysis of the human and murine Bruton's tyrosine kinase loci reveals conserved regulatory domains.</title>
        <authorList>
            <person name="Oeltjen J.C."/>
            <person name="Malley T.M."/>
            <person name="Muzny D.M."/>
            <person name="Miller W."/>
            <person name="Gibbs R.A."/>
            <person name="Belmont J.W."/>
        </authorList>
    </citation>
    <scope>NUCLEOTIDE SEQUENCE [GENOMIC DNA]</scope>
</reference>
<reference key="2">
    <citation type="submission" date="2003-05" db="EMBL/GenBank/DDBJ databases">
        <title>Identification of a migration-inducing gene.</title>
        <authorList>
            <person name="Kim J.W."/>
        </authorList>
    </citation>
    <scope>NUCLEOTIDE SEQUENCE [LARGE SCALE MRNA]</scope>
</reference>
<reference key="3">
    <citation type="submission" date="2004-06" db="EMBL/GenBank/DDBJ databases">
        <title>Cloning of human full open reading frames in Gateway(TM) system entry vector (pDONR201).</title>
        <authorList>
            <person name="Halleck A."/>
            <person name="Ebert L."/>
            <person name="Mkoundinya M."/>
            <person name="Schick M."/>
            <person name="Eisenstein S."/>
            <person name="Neubert P."/>
            <person name="Kstrang K."/>
            <person name="Schatten R."/>
            <person name="Shen B."/>
            <person name="Henze S."/>
            <person name="Mar W."/>
            <person name="Korn B."/>
            <person name="Zuo D."/>
            <person name="Hu Y."/>
            <person name="LaBaer J."/>
        </authorList>
    </citation>
    <scope>NUCLEOTIDE SEQUENCE [LARGE SCALE MRNA]</scope>
</reference>
<reference key="4">
    <citation type="submission" date="2005-02" db="EMBL/GenBank/DDBJ databases">
        <title>Identification of cell growth-inhibiting gene.</title>
        <authorList>
            <person name="Kim J.W."/>
            <person name="Kim H.K."/>
        </authorList>
    </citation>
    <scope>NUCLEOTIDE SEQUENCE [LARGE SCALE MRNA]</scope>
</reference>
<reference key="5">
    <citation type="journal article" date="2005" name="Nature">
        <title>The DNA sequence of the human X chromosome.</title>
        <authorList>
            <person name="Ross M.T."/>
            <person name="Grafham D.V."/>
            <person name="Coffey A.J."/>
            <person name="Scherer S."/>
            <person name="McLay K."/>
            <person name="Muzny D."/>
            <person name="Platzer M."/>
            <person name="Howell G.R."/>
            <person name="Burrows C."/>
            <person name="Bird C.P."/>
            <person name="Frankish A."/>
            <person name="Lovell F.L."/>
            <person name="Howe K.L."/>
            <person name="Ashurst J.L."/>
            <person name="Fulton R.S."/>
            <person name="Sudbrak R."/>
            <person name="Wen G."/>
            <person name="Jones M.C."/>
            <person name="Hurles M.E."/>
            <person name="Andrews T.D."/>
            <person name="Scott C.E."/>
            <person name="Searle S."/>
            <person name="Ramser J."/>
            <person name="Whittaker A."/>
            <person name="Deadman R."/>
            <person name="Carter N.P."/>
            <person name="Hunt S.E."/>
            <person name="Chen R."/>
            <person name="Cree A."/>
            <person name="Gunaratne P."/>
            <person name="Havlak P."/>
            <person name="Hodgson A."/>
            <person name="Metzker M.L."/>
            <person name="Richards S."/>
            <person name="Scott G."/>
            <person name="Steffen D."/>
            <person name="Sodergren E."/>
            <person name="Wheeler D.A."/>
            <person name="Worley K.C."/>
            <person name="Ainscough R."/>
            <person name="Ambrose K.D."/>
            <person name="Ansari-Lari M.A."/>
            <person name="Aradhya S."/>
            <person name="Ashwell R.I."/>
            <person name="Babbage A.K."/>
            <person name="Bagguley C.L."/>
            <person name="Ballabio A."/>
            <person name="Banerjee R."/>
            <person name="Barker G.E."/>
            <person name="Barlow K.F."/>
            <person name="Barrett I.P."/>
            <person name="Bates K.N."/>
            <person name="Beare D.M."/>
            <person name="Beasley H."/>
            <person name="Beasley O."/>
            <person name="Beck A."/>
            <person name="Bethel G."/>
            <person name="Blechschmidt K."/>
            <person name="Brady N."/>
            <person name="Bray-Allen S."/>
            <person name="Bridgeman A.M."/>
            <person name="Brown A.J."/>
            <person name="Brown M.J."/>
            <person name="Bonnin D."/>
            <person name="Bruford E.A."/>
            <person name="Buhay C."/>
            <person name="Burch P."/>
            <person name="Burford D."/>
            <person name="Burgess J."/>
            <person name="Burrill W."/>
            <person name="Burton J."/>
            <person name="Bye J.M."/>
            <person name="Carder C."/>
            <person name="Carrel L."/>
            <person name="Chako J."/>
            <person name="Chapman J.C."/>
            <person name="Chavez D."/>
            <person name="Chen E."/>
            <person name="Chen G."/>
            <person name="Chen Y."/>
            <person name="Chen Z."/>
            <person name="Chinault C."/>
            <person name="Ciccodicola A."/>
            <person name="Clark S.Y."/>
            <person name="Clarke G."/>
            <person name="Clee C.M."/>
            <person name="Clegg S."/>
            <person name="Clerc-Blankenburg K."/>
            <person name="Clifford K."/>
            <person name="Cobley V."/>
            <person name="Cole C.G."/>
            <person name="Conquer J.S."/>
            <person name="Corby N."/>
            <person name="Connor R.E."/>
            <person name="David R."/>
            <person name="Davies J."/>
            <person name="Davis C."/>
            <person name="Davis J."/>
            <person name="Delgado O."/>
            <person name="Deshazo D."/>
            <person name="Dhami P."/>
            <person name="Ding Y."/>
            <person name="Dinh H."/>
            <person name="Dodsworth S."/>
            <person name="Draper H."/>
            <person name="Dugan-Rocha S."/>
            <person name="Dunham A."/>
            <person name="Dunn M."/>
            <person name="Durbin K.J."/>
            <person name="Dutta I."/>
            <person name="Eades T."/>
            <person name="Ellwood M."/>
            <person name="Emery-Cohen A."/>
            <person name="Errington H."/>
            <person name="Evans K.L."/>
            <person name="Faulkner L."/>
            <person name="Francis F."/>
            <person name="Frankland J."/>
            <person name="Fraser A.E."/>
            <person name="Galgoczy P."/>
            <person name="Gilbert J."/>
            <person name="Gill R."/>
            <person name="Gloeckner G."/>
            <person name="Gregory S.G."/>
            <person name="Gribble S."/>
            <person name="Griffiths C."/>
            <person name="Grocock R."/>
            <person name="Gu Y."/>
            <person name="Gwilliam R."/>
            <person name="Hamilton C."/>
            <person name="Hart E.A."/>
            <person name="Hawes A."/>
            <person name="Heath P.D."/>
            <person name="Heitmann K."/>
            <person name="Hennig S."/>
            <person name="Hernandez J."/>
            <person name="Hinzmann B."/>
            <person name="Ho S."/>
            <person name="Hoffs M."/>
            <person name="Howden P.J."/>
            <person name="Huckle E.J."/>
            <person name="Hume J."/>
            <person name="Hunt P.J."/>
            <person name="Hunt A.R."/>
            <person name="Isherwood J."/>
            <person name="Jacob L."/>
            <person name="Johnson D."/>
            <person name="Jones S."/>
            <person name="de Jong P.J."/>
            <person name="Joseph S.S."/>
            <person name="Keenan S."/>
            <person name="Kelly S."/>
            <person name="Kershaw J.K."/>
            <person name="Khan Z."/>
            <person name="Kioschis P."/>
            <person name="Klages S."/>
            <person name="Knights A.J."/>
            <person name="Kosiura A."/>
            <person name="Kovar-Smith C."/>
            <person name="Laird G.K."/>
            <person name="Langford C."/>
            <person name="Lawlor S."/>
            <person name="Leversha M."/>
            <person name="Lewis L."/>
            <person name="Liu W."/>
            <person name="Lloyd C."/>
            <person name="Lloyd D.M."/>
            <person name="Loulseged H."/>
            <person name="Loveland J.E."/>
            <person name="Lovell J.D."/>
            <person name="Lozado R."/>
            <person name="Lu J."/>
            <person name="Lyne R."/>
            <person name="Ma J."/>
            <person name="Maheshwari M."/>
            <person name="Matthews L.H."/>
            <person name="McDowall J."/>
            <person name="McLaren S."/>
            <person name="McMurray A."/>
            <person name="Meidl P."/>
            <person name="Meitinger T."/>
            <person name="Milne S."/>
            <person name="Miner G."/>
            <person name="Mistry S.L."/>
            <person name="Morgan M."/>
            <person name="Morris S."/>
            <person name="Mueller I."/>
            <person name="Mullikin J.C."/>
            <person name="Nguyen N."/>
            <person name="Nordsiek G."/>
            <person name="Nyakatura G."/>
            <person name="O'dell C.N."/>
            <person name="Okwuonu G."/>
            <person name="Palmer S."/>
            <person name="Pandian R."/>
            <person name="Parker D."/>
            <person name="Parrish J."/>
            <person name="Pasternak S."/>
            <person name="Patel D."/>
            <person name="Pearce A.V."/>
            <person name="Pearson D.M."/>
            <person name="Pelan S.E."/>
            <person name="Perez L."/>
            <person name="Porter K.M."/>
            <person name="Ramsey Y."/>
            <person name="Reichwald K."/>
            <person name="Rhodes S."/>
            <person name="Ridler K.A."/>
            <person name="Schlessinger D."/>
            <person name="Schueler M.G."/>
            <person name="Sehra H.K."/>
            <person name="Shaw-Smith C."/>
            <person name="Shen H."/>
            <person name="Sheridan E.M."/>
            <person name="Shownkeen R."/>
            <person name="Skuce C.D."/>
            <person name="Smith M.L."/>
            <person name="Sotheran E.C."/>
            <person name="Steingruber H.E."/>
            <person name="Steward C.A."/>
            <person name="Storey R."/>
            <person name="Swann R.M."/>
            <person name="Swarbreck D."/>
            <person name="Tabor P.E."/>
            <person name="Taudien S."/>
            <person name="Taylor T."/>
            <person name="Teague B."/>
            <person name="Thomas K."/>
            <person name="Thorpe A."/>
            <person name="Timms K."/>
            <person name="Tracey A."/>
            <person name="Trevanion S."/>
            <person name="Tromans A.C."/>
            <person name="d'Urso M."/>
            <person name="Verduzco D."/>
            <person name="Villasana D."/>
            <person name="Waldron L."/>
            <person name="Wall M."/>
            <person name="Wang Q."/>
            <person name="Warren J."/>
            <person name="Warry G.L."/>
            <person name="Wei X."/>
            <person name="West A."/>
            <person name="Whitehead S.L."/>
            <person name="Whiteley M.N."/>
            <person name="Wilkinson J.E."/>
            <person name="Willey D.L."/>
            <person name="Williams G."/>
            <person name="Williams L."/>
            <person name="Williamson A."/>
            <person name="Williamson H."/>
            <person name="Wilming L."/>
            <person name="Woodmansey R.L."/>
            <person name="Wray P.W."/>
            <person name="Yen J."/>
            <person name="Zhang J."/>
            <person name="Zhou J."/>
            <person name="Zoghbi H."/>
            <person name="Zorilla S."/>
            <person name="Buck D."/>
            <person name="Reinhardt R."/>
            <person name="Poustka A."/>
            <person name="Rosenthal A."/>
            <person name="Lehrach H."/>
            <person name="Meindl A."/>
            <person name="Minx P.J."/>
            <person name="Hillier L.W."/>
            <person name="Willard H.F."/>
            <person name="Wilson R.K."/>
            <person name="Waterston R.H."/>
            <person name="Rice C.M."/>
            <person name="Vaudin M."/>
            <person name="Coulson A."/>
            <person name="Nelson D.L."/>
            <person name="Weinstock G."/>
            <person name="Sulston J.E."/>
            <person name="Durbin R.M."/>
            <person name="Hubbard T."/>
            <person name="Gibbs R.A."/>
            <person name="Beck S."/>
            <person name="Rogers J."/>
            <person name="Bentley D.R."/>
        </authorList>
    </citation>
    <scope>NUCLEOTIDE SEQUENCE [LARGE SCALE GENOMIC DNA]</scope>
</reference>
<reference key="6">
    <citation type="submission" date="2005-07" db="EMBL/GenBank/DDBJ databases">
        <authorList>
            <person name="Mural R.J."/>
            <person name="Istrail S."/>
            <person name="Sutton G.G."/>
            <person name="Florea L."/>
            <person name="Halpern A.L."/>
            <person name="Mobarry C.M."/>
            <person name="Lippert R."/>
            <person name="Walenz B."/>
            <person name="Shatkay H."/>
            <person name="Dew I."/>
            <person name="Miller J.R."/>
            <person name="Flanigan M.J."/>
            <person name="Edwards N.J."/>
            <person name="Bolanos R."/>
            <person name="Fasulo D."/>
            <person name="Halldorsson B.V."/>
            <person name="Hannenhalli S."/>
            <person name="Turner R."/>
            <person name="Yooseph S."/>
            <person name="Lu F."/>
            <person name="Nusskern D.R."/>
            <person name="Shue B.C."/>
            <person name="Zheng X.H."/>
            <person name="Zhong F."/>
            <person name="Delcher A.L."/>
            <person name="Huson D.H."/>
            <person name="Kravitz S.A."/>
            <person name="Mouchard L."/>
            <person name="Reinert K."/>
            <person name="Remington K.A."/>
            <person name="Clark A.G."/>
            <person name="Waterman M.S."/>
            <person name="Eichler E.E."/>
            <person name="Adams M.D."/>
            <person name="Hunkapiller M.W."/>
            <person name="Myers E.W."/>
            <person name="Venter J.C."/>
        </authorList>
    </citation>
    <scope>NUCLEOTIDE SEQUENCE [LARGE SCALE GENOMIC DNA]</scope>
</reference>
<reference key="7">
    <citation type="journal article" date="2004" name="Genome Res.">
        <title>The status, quality, and expansion of the NIH full-length cDNA project: the Mammalian Gene Collection (MGC).</title>
        <authorList>
            <consortium name="The MGC Project Team"/>
        </authorList>
    </citation>
    <scope>NUCLEOTIDE SEQUENCE [LARGE SCALE MRNA]</scope>
    <source>
        <tissue>Eye</tissue>
        <tissue>Lung</tissue>
        <tissue>Testis</tissue>
    </source>
</reference>
<reference key="8">
    <citation type="journal article" date="2014" name="Curr. Opin. Struct. Biol.">
        <title>A new system for naming ribosomal proteins.</title>
        <authorList>
            <person name="Ban N."/>
            <person name="Beckmann R."/>
            <person name="Cate J.H.D."/>
            <person name="Dinman J.D."/>
            <person name="Dragon F."/>
            <person name="Ellis S.R."/>
            <person name="Lafontaine D.L.J."/>
            <person name="Lindahl L."/>
            <person name="Liljas A."/>
            <person name="Lipton J.M."/>
            <person name="McAlear M.A."/>
            <person name="Moore P.B."/>
            <person name="Noller H.F."/>
            <person name="Ortega J."/>
            <person name="Panse V.G."/>
            <person name="Ramakrishnan V."/>
            <person name="Spahn C.M.T."/>
            <person name="Steitz T.A."/>
            <person name="Tchorzewski M."/>
            <person name="Tollervey D."/>
            <person name="Warren A.J."/>
            <person name="Williamson J.R."/>
            <person name="Wilson D."/>
            <person name="Yonath A."/>
            <person name="Yusupov M."/>
        </authorList>
    </citation>
    <scope>NOMENCLATURE</scope>
</reference>
<reference key="9">
    <citation type="journal article" date="2013" name="Nature">
        <title>Structures of the human and Drosophila 80S ribosome.</title>
        <authorList>
            <person name="Anger A.M."/>
            <person name="Armache J.P."/>
            <person name="Berninghausen O."/>
            <person name="Habeck M."/>
            <person name="Subklewe M."/>
            <person name="Wilson D.N."/>
            <person name="Beckmann R."/>
        </authorList>
    </citation>
    <scope>STRUCTURE BY ELECTRON MICROSCOPY (5.0 ANGSTROMS)</scope>
    <scope>FUNCTION</scope>
    <scope>SUBUNIT</scope>
    <scope>SUBCELLULAR LOCATION</scope>
</reference>
<reference evidence="6 7 8 9" key="10">
    <citation type="journal article" date="2020" name="Nat. Commun.">
        <title>Structural snapshots of human pre-60S ribosomal particles before and after nuclear export.</title>
        <authorList>
            <person name="Liang X."/>
            <person name="Zuo M.Q."/>
            <person name="Zhang Y."/>
            <person name="Li N."/>
            <person name="Ma C."/>
            <person name="Dong M.Q."/>
            <person name="Gao N."/>
        </authorList>
    </citation>
    <scope>STRUCTURE BY ELECTRON MICROSCOPY (3.09 ANGSTROMS)</scope>
    <scope>FUNCTION</scope>
    <scope>SUBUNIT</scope>
</reference>
<comment type="function">
    <text evidence="2 3">Component of the large ribosomal subunit. The ribosome is a large ribonucleoprotein complex responsible for the synthesis of proteins in the cell.</text>
</comment>
<comment type="subunit">
    <text evidence="2 3">Component of the large ribosomal subunit.</text>
</comment>
<comment type="interaction">
    <interactant intactId="EBI-1054835">
        <id>P83881</id>
    </interactant>
    <interactant intactId="EBI-4401674">
        <id>Q96BJ3</id>
        <label>AIDA</label>
    </interactant>
    <organismsDiffer>false</organismsDiffer>
    <experiments>3</experiments>
</comment>
<comment type="subcellular location">
    <subcellularLocation>
        <location evidence="2">Cytoplasm</location>
    </subcellularLocation>
</comment>
<comment type="similarity">
    <text evidence="5">Belongs to the eukaryotic ribosomal protein eL42 family.</text>
</comment>